<name>TGT_LAWIP</name>
<feature type="chain" id="PRO_1000077011" description="Queuine tRNA-ribosyltransferase">
    <location>
        <begin position="1"/>
        <end position="371"/>
    </location>
</feature>
<feature type="region of interest" description="RNA binding" evidence="1">
    <location>
        <begin position="249"/>
        <end position="255"/>
    </location>
</feature>
<feature type="region of interest" description="RNA binding; important for wobble base 34 recognition" evidence="1">
    <location>
        <begin position="273"/>
        <end position="277"/>
    </location>
</feature>
<feature type="active site" description="Proton acceptor" evidence="1">
    <location>
        <position position="93"/>
    </location>
</feature>
<feature type="active site" description="Nucleophile" evidence="1">
    <location>
        <position position="268"/>
    </location>
</feature>
<feature type="binding site" evidence="1">
    <location>
        <begin position="93"/>
        <end position="97"/>
    </location>
    <ligand>
        <name>substrate</name>
    </ligand>
</feature>
<feature type="binding site" evidence="1">
    <location>
        <position position="147"/>
    </location>
    <ligand>
        <name>substrate</name>
    </ligand>
</feature>
<feature type="binding site" evidence="1">
    <location>
        <position position="191"/>
    </location>
    <ligand>
        <name>substrate</name>
    </ligand>
</feature>
<feature type="binding site" evidence="1">
    <location>
        <position position="218"/>
    </location>
    <ligand>
        <name>substrate</name>
    </ligand>
</feature>
<feature type="binding site" evidence="1">
    <location>
        <position position="306"/>
    </location>
    <ligand>
        <name>Zn(2+)</name>
        <dbReference type="ChEBI" id="CHEBI:29105"/>
    </ligand>
</feature>
<feature type="binding site" evidence="1">
    <location>
        <position position="308"/>
    </location>
    <ligand>
        <name>Zn(2+)</name>
        <dbReference type="ChEBI" id="CHEBI:29105"/>
    </ligand>
</feature>
<feature type="binding site" evidence="1">
    <location>
        <position position="311"/>
    </location>
    <ligand>
        <name>Zn(2+)</name>
        <dbReference type="ChEBI" id="CHEBI:29105"/>
    </ligand>
</feature>
<feature type="binding site" evidence="1">
    <location>
        <position position="337"/>
    </location>
    <ligand>
        <name>Zn(2+)</name>
        <dbReference type="ChEBI" id="CHEBI:29105"/>
    </ligand>
</feature>
<accession>Q1MPU5</accession>
<reference key="1">
    <citation type="submission" date="2005-11" db="EMBL/GenBank/DDBJ databases">
        <title>The complete genome sequence of Lawsonia intracellularis: the causative agent of proliferative enteropathy.</title>
        <authorList>
            <person name="Kaur K."/>
            <person name="Zhang Q."/>
            <person name="Beckler D."/>
            <person name="Munir S."/>
            <person name="Li L."/>
            <person name="Kinsley K."/>
            <person name="Herron L."/>
            <person name="Peterson A."/>
            <person name="May B."/>
            <person name="Singh S."/>
            <person name="Gebhart C."/>
            <person name="Kapur V."/>
        </authorList>
    </citation>
    <scope>NUCLEOTIDE SEQUENCE [LARGE SCALE GENOMIC DNA]</scope>
    <source>
        <strain>PHE/MN1-00</strain>
    </source>
</reference>
<evidence type="ECO:0000255" key="1">
    <source>
        <dbReference type="HAMAP-Rule" id="MF_00168"/>
    </source>
</evidence>
<keyword id="KW-0328">Glycosyltransferase</keyword>
<keyword id="KW-0479">Metal-binding</keyword>
<keyword id="KW-0671">Queuosine biosynthesis</keyword>
<keyword id="KW-1185">Reference proteome</keyword>
<keyword id="KW-0808">Transferase</keyword>
<keyword id="KW-0819">tRNA processing</keyword>
<keyword id="KW-0862">Zinc</keyword>
<dbReference type="EC" id="2.4.2.29" evidence="1"/>
<dbReference type="EMBL" id="AM180252">
    <property type="protein sequence ID" value="CAJ54982.1"/>
    <property type="molecule type" value="Genomic_DNA"/>
</dbReference>
<dbReference type="RefSeq" id="WP_011527011.1">
    <property type="nucleotide sequence ID" value="NC_008011.1"/>
</dbReference>
<dbReference type="SMR" id="Q1MPU5"/>
<dbReference type="STRING" id="363253.LI0928"/>
<dbReference type="KEGG" id="lip:LI0928"/>
<dbReference type="eggNOG" id="COG0343">
    <property type="taxonomic scope" value="Bacteria"/>
</dbReference>
<dbReference type="HOGENOM" id="CLU_022060_0_1_7"/>
<dbReference type="OrthoDB" id="9805417at2"/>
<dbReference type="UniPathway" id="UPA00392"/>
<dbReference type="Proteomes" id="UP000002430">
    <property type="component" value="Chromosome"/>
</dbReference>
<dbReference type="GO" id="GO:0005829">
    <property type="term" value="C:cytosol"/>
    <property type="evidence" value="ECO:0007669"/>
    <property type="project" value="TreeGrafter"/>
</dbReference>
<dbReference type="GO" id="GO:0046872">
    <property type="term" value="F:metal ion binding"/>
    <property type="evidence" value="ECO:0007669"/>
    <property type="project" value="UniProtKB-KW"/>
</dbReference>
<dbReference type="GO" id="GO:0008479">
    <property type="term" value="F:tRNA-guanosine(34) queuine transglycosylase activity"/>
    <property type="evidence" value="ECO:0007669"/>
    <property type="project" value="UniProtKB-UniRule"/>
</dbReference>
<dbReference type="GO" id="GO:0008616">
    <property type="term" value="P:queuosine biosynthetic process"/>
    <property type="evidence" value="ECO:0007669"/>
    <property type="project" value="UniProtKB-UniRule"/>
</dbReference>
<dbReference type="GO" id="GO:0002099">
    <property type="term" value="P:tRNA wobble guanine modification"/>
    <property type="evidence" value="ECO:0007669"/>
    <property type="project" value="TreeGrafter"/>
</dbReference>
<dbReference type="GO" id="GO:0101030">
    <property type="term" value="P:tRNA-guanine transglycosylation"/>
    <property type="evidence" value="ECO:0007669"/>
    <property type="project" value="InterPro"/>
</dbReference>
<dbReference type="FunFam" id="3.20.20.105:FF:000001">
    <property type="entry name" value="Queuine tRNA-ribosyltransferase"/>
    <property type="match status" value="1"/>
</dbReference>
<dbReference type="Gene3D" id="3.20.20.105">
    <property type="entry name" value="Queuine tRNA-ribosyltransferase-like"/>
    <property type="match status" value="1"/>
</dbReference>
<dbReference type="HAMAP" id="MF_00168">
    <property type="entry name" value="Q_tRNA_Tgt"/>
    <property type="match status" value="1"/>
</dbReference>
<dbReference type="InterPro" id="IPR050076">
    <property type="entry name" value="ArchSynthase1/Queuine_TRR"/>
</dbReference>
<dbReference type="InterPro" id="IPR004803">
    <property type="entry name" value="TGT"/>
</dbReference>
<dbReference type="InterPro" id="IPR036511">
    <property type="entry name" value="TGT-like_sf"/>
</dbReference>
<dbReference type="InterPro" id="IPR002616">
    <property type="entry name" value="tRNA_ribo_trans-like"/>
</dbReference>
<dbReference type="NCBIfam" id="TIGR00430">
    <property type="entry name" value="Q_tRNA_tgt"/>
    <property type="match status" value="1"/>
</dbReference>
<dbReference type="NCBIfam" id="TIGR00449">
    <property type="entry name" value="tgt_general"/>
    <property type="match status" value="1"/>
</dbReference>
<dbReference type="PANTHER" id="PTHR46499">
    <property type="entry name" value="QUEUINE TRNA-RIBOSYLTRANSFERASE"/>
    <property type="match status" value="1"/>
</dbReference>
<dbReference type="PANTHER" id="PTHR46499:SF1">
    <property type="entry name" value="QUEUINE TRNA-RIBOSYLTRANSFERASE"/>
    <property type="match status" value="1"/>
</dbReference>
<dbReference type="Pfam" id="PF01702">
    <property type="entry name" value="TGT"/>
    <property type="match status" value="1"/>
</dbReference>
<dbReference type="SUPFAM" id="SSF51713">
    <property type="entry name" value="tRNA-guanine transglycosylase"/>
    <property type="match status" value="1"/>
</dbReference>
<protein>
    <recommendedName>
        <fullName evidence="1">Queuine tRNA-ribosyltransferase</fullName>
        <ecNumber evidence="1">2.4.2.29</ecNumber>
    </recommendedName>
    <alternativeName>
        <fullName evidence="1">Guanine insertion enzyme</fullName>
    </alternativeName>
    <alternativeName>
        <fullName evidence="1">tRNA-guanine transglycosylase</fullName>
    </alternativeName>
</protein>
<sequence>MNPPGTFHITATDGSARTGVLYTAHGIVNTPIFMPVGTVGSVKAIAPDDLEAISAEIILGNTYHLYLRPGDELIARRGGLHVFNAWEKPILTDSGGFQIFSLSSLRKLHKDGVIFRSHIDGSKHVFTPERVITIQRNLNSDIMMVLDECVAANADYTYTAQSLDLTIHWAKRSRDVYPKGEGDNLLFGIVQGGMFKSLRHSSVSQLIDLDFDGYAIGGLSVGEPKEIMMELLYDTAPLLPKTKPRYLMGVGTPLDILKGIEAGVDMFDCVLPTRNARNGTLYTSQGKLNIKRKEYAEDDLPLDENCSCYTCQTFSRAYLRHLFHSQELLAFRLNSIHNLTYFLNIIFGARKAIHGGYFFNYKQQVEQLYCN</sequence>
<gene>
    <name evidence="1" type="primary">tgt</name>
    <name type="ordered locus">LI0928</name>
</gene>
<comment type="function">
    <text evidence="1">Catalyzes the base-exchange of a guanine (G) residue with the queuine precursor 7-aminomethyl-7-deazaguanine (PreQ1) at position 34 (anticodon wobble position) in tRNAs with GU(N) anticodons (tRNA-Asp, -Asn, -His and -Tyr). Catalysis occurs through a double-displacement mechanism. The nucleophile active site attacks the C1' of nucleotide 34 to detach the guanine base from the RNA, forming a covalent enzyme-RNA intermediate. The proton acceptor active site deprotonates the incoming PreQ1, allowing a nucleophilic attack on the C1' of the ribose to form the product. After dissociation, two additional enzymatic reactions on the tRNA convert PreQ1 to queuine (Q), resulting in the hypermodified nucleoside queuosine (7-(((4,5-cis-dihydroxy-2-cyclopenten-1-yl)amino)methyl)-7-deazaguanosine).</text>
</comment>
<comment type="catalytic activity">
    <reaction evidence="1">
        <text>7-aminomethyl-7-carbaguanine + guanosine(34) in tRNA = 7-aminomethyl-7-carbaguanosine(34) in tRNA + guanine</text>
        <dbReference type="Rhea" id="RHEA:24104"/>
        <dbReference type="Rhea" id="RHEA-COMP:10341"/>
        <dbReference type="Rhea" id="RHEA-COMP:10342"/>
        <dbReference type="ChEBI" id="CHEBI:16235"/>
        <dbReference type="ChEBI" id="CHEBI:58703"/>
        <dbReference type="ChEBI" id="CHEBI:74269"/>
        <dbReference type="ChEBI" id="CHEBI:82833"/>
        <dbReference type="EC" id="2.4.2.29"/>
    </reaction>
</comment>
<comment type="cofactor">
    <cofactor evidence="1">
        <name>Zn(2+)</name>
        <dbReference type="ChEBI" id="CHEBI:29105"/>
    </cofactor>
    <text evidence="1">Binds 1 zinc ion per subunit.</text>
</comment>
<comment type="pathway">
    <text evidence="1">tRNA modification; tRNA-queuosine biosynthesis.</text>
</comment>
<comment type="subunit">
    <text evidence="1">Homodimer. Within each dimer, one monomer is responsible for RNA recognition and catalysis, while the other monomer binds to the replacement base PreQ1.</text>
</comment>
<comment type="similarity">
    <text evidence="1">Belongs to the queuine tRNA-ribosyltransferase family.</text>
</comment>
<organism>
    <name type="scientific">Lawsonia intracellularis (strain PHE/MN1-00)</name>
    <dbReference type="NCBI Taxonomy" id="363253"/>
    <lineage>
        <taxon>Bacteria</taxon>
        <taxon>Pseudomonadati</taxon>
        <taxon>Thermodesulfobacteriota</taxon>
        <taxon>Desulfovibrionia</taxon>
        <taxon>Desulfovibrionales</taxon>
        <taxon>Desulfovibrionaceae</taxon>
        <taxon>Lawsonia</taxon>
    </lineage>
</organism>
<proteinExistence type="inferred from homology"/>